<comment type="function">
    <text evidence="1">Converts the aldose L-fucose into the corresponding ketose L-fuculose.</text>
</comment>
<comment type="catalytic activity">
    <reaction evidence="1">
        <text>L-fucose = L-fuculose</text>
        <dbReference type="Rhea" id="RHEA:17233"/>
        <dbReference type="ChEBI" id="CHEBI:2181"/>
        <dbReference type="ChEBI" id="CHEBI:17617"/>
        <dbReference type="EC" id="5.3.1.25"/>
    </reaction>
</comment>
<comment type="cofactor">
    <cofactor evidence="1">
        <name>Mn(2+)</name>
        <dbReference type="ChEBI" id="CHEBI:29035"/>
    </cofactor>
</comment>
<comment type="pathway">
    <text evidence="1">Carbohydrate degradation; L-fucose degradation; L-lactaldehyde and glycerone phosphate from L-fucose: step 1/3.</text>
</comment>
<comment type="subunit">
    <text evidence="1">Homohexamer.</text>
</comment>
<comment type="subcellular location">
    <subcellularLocation>
        <location evidence="1">Cytoplasm</location>
    </subcellularLocation>
</comment>
<comment type="similarity">
    <text evidence="1">Belongs to the L-fucose isomerase family.</text>
</comment>
<sequence length="591" mass="64977">MKKISLPKIGIRPVIDGRRMGVRESLEEQTMNMAKATAALLTEKLRHACGAAVECVISDTCIAGMAEAAACEEKFSSQNVGLTITVTPCWCYGSETIDMDPTRPKAIWGFNGTERPGAVYLAAALAAHSQKGIPAFSIYGHDVQDADDTSIPADVEEKLLRFARAGLAVASMKGKSYLSLGGVSMGIAGSIVDHNFFESWLGMKVQAVDMTELRRRIDQKIYDEAELEMALAWADKNFRYGEDENNKQYQRNAEQSRAVLRESLLMAMCIRDMMQGNSKLADIGRVEESLGYNAIAAGFQGQRHWTDQYPNGDTAEAILNSSFDWNGVREPFVVATENDSLNGVAMLMGHQLTGTAQVFADVRTYWSPEAIERVTGHKLDGLAEHGIIHLINSGSAALDGSCKQRDSEGNPTMKPHWEISQQEADACLAATEWCPAIHEYFRGGGYSSRFLTEGGVPFTMTRVNIIKGLGPVLQIAEGWSVELPKDVHDILNKRTNSTWPTTWFAPRLTGKGPFTDVYSVMANWGANHGVLTIGHVGADFITLASMLRIPVCMHNVEETKVYRPSAWAAHGMDIEGQDYRACQNYGPLYKR</sequence>
<protein>
    <recommendedName>
        <fullName evidence="1">L-fucose isomerase</fullName>
        <ecNumber evidence="1">5.3.1.25</ecNumber>
    </recommendedName>
    <alternativeName>
        <fullName evidence="1">6-deoxy-L-galactose isomerase</fullName>
    </alternativeName>
    <alternativeName>
        <fullName>FucIase</fullName>
    </alternativeName>
</protein>
<gene>
    <name evidence="1" type="primary">fucI</name>
    <name type="ordered locus">BWG_2540</name>
</gene>
<accession>C4ZZV7</accession>
<keyword id="KW-0119">Carbohydrate metabolism</keyword>
<keyword id="KW-0963">Cytoplasm</keyword>
<keyword id="KW-0294">Fucose metabolism</keyword>
<keyword id="KW-0413">Isomerase</keyword>
<keyword id="KW-0464">Manganese</keyword>
<keyword id="KW-0479">Metal-binding</keyword>
<name>FUCI_ECOBW</name>
<dbReference type="EC" id="5.3.1.25" evidence="1"/>
<dbReference type="EMBL" id="CP001396">
    <property type="protein sequence ID" value="ACR63645.1"/>
    <property type="molecule type" value="Genomic_DNA"/>
</dbReference>
<dbReference type="RefSeq" id="WP_000724153.1">
    <property type="nucleotide sequence ID" value="NC_012759.1"/>
</dbReference>
<dbReference type="SMR" id="C4ZZV7"/>
<dbReference type="GeneID" id="75172886"/>
<dbReference type="KEGG" id="ebw:BWG_2540"/>
<dbReference type="HOGENOM" id="CLU_033326_1_0_6"/>
<dbReference type="UniPathway" id="UPA00563">
    <property type="reaction ID" value="UER00624"/>
</dbReference>
<dbReference type="GO" id="GO:0005737">
    <property type="term" value="C:cytoplasm"/>
    <property type="evidence" value="ECO:0007669"/>
    <property type="project" value="UniProtKB-SubCell"/>
</dbReference>
<dbReference type="GO" id="GO:0008790">
    <property type="term" value="F:arabinose isomerase activity"/>
    <property type="evidence" value="ECO:0007669"/>
    <property type="project" value="TreeGrafter"/>
</dbReference>
<dbReference type="GO" id="GO:0008736">
    <property type="term" value="F:L-fucose isomerase activity"/>
    <property type="evidence" value="ECO:0007669"/>
    <property type="project" value="UniProtKB-UniRule"/>
</dbReference>
<dbReference type="GO" id="GO:0030145">
    <property type="term" value="F:manganese ion binding"/>
    <property type="evidence" value="ECO:0007669"/>
    <property type="project" value="UniProtKB-UniRule"/>
</dbReference>
<dbReference type="GO" id="GO:0019571">
    <property type="term" value="P:D-arabinose catabolic process"/>
    <property type="evidence" value="ECO:0007669"/>
    <property type="project" value="TreeGrafter"/>
</dbReference>
<dbReference type="GO" id="GO:0042355">
    <property type="term" value="P:L-fucose catabolic process"/>
    <property type="evidence" value="ECO:0007669"/>
    <property type="project" value="UniProtKB-UniRule"/>
</dbReference>
<dbReference type="CDD" id="cd03556">
    <property type="entry name" value="L-fucose_isomerase"/>
    <property type="match status" value="1"/>
</dbReference>
<dbReference type="FunFam" id="3.20.14.10:FF:000001">
    <property type="entry name" value="L-fucose isomerase"/>
    <property type="match status" value="1"/>
</dbReference>
<dbReference type="FunFam" id="3.40.275.10:FF:000001">
    <property type="entry name" value="L-fucose isomerase"/>
    <property type="match status" value="1"/>
</dbReference>
<dbReference type="FunFam" id="3.40.50.1070:FF:000001">
    <property type="entry name" value="L-fucose isomerase"/>
    <property type="match status" value="1"/>
</dbReference>
<dbReference type="Gene3D" id="3.40.50.1070">
    <property type="match status" value="1"/>
</dbReference>
<dbReference type="Gene3D" id="3.40.275.10">
    <property type="entry name" value="L-fucose Isomerase, Chain A, domain 2"/>
    <property type="match status" value="1"/>
</dbReference>
<dbReference type="Gene3D" id="3.20.14.10">
    <property type="entry name" value="L-fucose/L-arabinose isomerase, C-terminal"/>
    <property type="match status" value="1"/>
</dbReference>
<dbReference type="HAMAP" id="MF_01254">
    <property type="entry name" value="Fucose_iso"/>
    <property type="match status" value="1"/>
</dbReference>
<dbReference type="InterPro" id="IPR004216">
    <property type="entry name" value="Fuc/Ara_isomerase_C"/>
</dbReference>
<dbReference type="InterPro" id="IPR038393">
    <property type="entry name" value="Fuc_iso_dom3_sf"/>
</dbReference>
<dbReference type="InterPro" id="IPR015888">
    <property type="entry name" value="Fuc_isomerase_C"/>
</dbReference>
<dbReference type="InterPro" id="IPR038391">
    <property type="entry name" value="Fucose_iso_dom1_sf"/>
</dbReference>
<dbReference type="InterPro" id="IPR012888">
    <property type="entry name" value="Fucose_iso_N1"/>
</dbReference>
<dbReference type="InterPro" id="IPR005763">
    <property type="entry name" value="Fucose_isomerase"/>
</dbReference>
<dbReference type="InterPro" id="IPR038392">
    <property type="entry name" value="Fucose_isomerase_dom2_sf"/>
</dbReference>
<dbReference type="InterPro" id="IPR009015">
    <property type="entry name" value="Fucose_isomerase_N/cen_sf"/>
</dbReference>
<dbReference type="InterPro" id="IPR012889">
    <property type="entry name" value="Fucose_isomerase_N2"/>
</dbReference>
<dbReference type="NCBIfam" id="TIGR01089">
    <property type="entry name" value="fucI"/>
    <property type="match status" value="1"/>
</dbReference>
<dbReference type="NCBIfam" id="NF008220">
    <property type="entry name" value="PRK10991.1"/>
    <property type="match status" value="1"/>
</dbReference>
<dbReference type="PANTHER" id="PTHR37840">
    <property type="entry name" value="L-FUCOSE ISOMERASE"/>
    <property type="match status" value="1"/>
</dbReference>
<dbReference type="PANTHER" id="PTHR37840:SF1">
    <property type="entry name" value="L-FUCOSE ISOMERASE"/>
    <property type="match status" value="1"/>
</dbReference>
<dbReference type="Pfam" id="PF02952">
    <property type="entry name" value="Fucose_iso_C"/>
    <property type="match status" value="1"/>
</dbReference>
<dbReference type="Pfam" id="PF07881">
    <property type="entry name" value="Fucose_iso_N1"/>
    <property type="match status" value="1"/>
</dbReference>
<dbReference type="Pfam" id="PF07882">
    <property type="entry name" value="Fucose_iso_N2"/>
    <property type="match status" value="1"/>
</dbReference>
<dbReference type="SUPFAM" id="SSF50443">
    <property type="entry name" value="FucI/AraA C-terminal domain-like"/>
    <property type="match status" value="1"/>
</dbReference>
<dbReference type="SUPFAM" id="SSF53743">
    <property type="entry name" value="FucI/AraA N-terminal and middle domains"/>
    <property type="match status" value="1"/>
</dbReference>
<feature type="chain" id="PRO_1000214117" description="L-fucose isomerase">
    <location>
        <begin position="1"/>
        <end position="591"/>
    </location>
</feature>
<feature type="active site" description="Proton acceptor" evidence="1">
    <location>
        <position position="337"/>
    </location>
</feature>
<feature type="active site" description="Proton acceptor" evidence="1">
    <location>
        <position position="361"/>
    </location>
</feature>
<feature type="binding site" evidence="1">
    <location>
        <position position="337"/>
    </location>
    <ligand>
        <name>Mn(2+)</name>
        <dbReference type="ChEBI" id="CHEBI:29035"/>
    </ligand>
</feature>
<feature type="binding site" evidence="1">
    <location>
        <position position="361"/>
    </location>
    <ligand>
        <name>Mn(2+)</name>
        <dbReference type="ChEBI" id="CHEBI:29035"/>
    </ligand>
</feature>
<feature type="binding site" evidence="1">
    <location>
        <position position="528"/>
    </location>
    <ligand>
        <name>Mn(2+)</name>
        <dbReference type="ChEBI" id="CHEBI:29035"/>
    </ligand>
</feature>
<reference key="1">
    <citation type="journal article" date="2009" name="J. Bacteriol.">
        <title>Genomic sequencing reveals regulatory mutations and recombinational events in the widely used MC4100 lineage of Escherichia coli K-12.</title>
        <authorList>
            <person name="Ferenci T."/>
            <person name="Zhou Z."/>
            <person name="Betteridge T."/>
            <person name="Ren Y."/>
            <person name="Liu Y."/>
            <person name="Feng L."/>
            <person name="Reeves P.R."/>
            <person name="Wang L."/>
        </authorList>
    </citation>
    <scope>NUCLEOTIDE SEQUENCE [LARGE SCALE GENOMIC DNA]</scope>
    <source>
        <strain>K12 / MC4100 / BW2952</strain>
    </source>
</reference>
<organism>
    <name type="scientific">Escherichia coli (strain K12 / MC4100 / BW2952)</name>
    <dbReference type="NCBI Taxonomy" id="595496"/>
    <lineage>
        <taxon>Bacteria</taxon>
        <taxon>Pseudomonadati</taxon>
        <taxon>Pseudomonadota</taxon>
        <taxon>Gammaproteobacteria</taxon>
        <taxon>Enterobacterales</taxon>
        <taxon>Enterobacteriaceae</taxon>
        <taxon>Escherichia</taxon>
    </lineage>
</organism>
<evidence type="ECO:0000255" key="1">
    <source>
        <dbReference type="HAMAP-Rule" id="MF_01254"/>
    </source>
</evidence>
<proteinExistence type="inferred from homology"/>